<protein>
    <recommendedName>
        <fullName>SIT4-associating protein SAP190</fullName>
    </recommendedName>
</protein>
<dbReference type="EMBL" id="FN393077">
    <property type="protein sequence ID" value="CAY81108.1"/>
    <property type="molecule type" value="Genomic_DNA"/>
</dbReference>
<dbReference type="HOGENOM" id="CLU_003676_2_0_1"/>
<dbReference type="OrthoDB" id="36824at4893"/>
<dbReference type="Proteomes" id="UP000000286">
    <property type="component" value="Chromosome XI, Scaffold EC1118_1K5"/>
</dbReference>
<dbReference type="GO" id="GO:0005829">
    <property type="term" value="C:cytosol"/>
    <property type="evidence" value="ECO:0007669"/>
    <property type="project" value="TreeGrafter"/>
</dbReference>
<dbReference type="GO" id="GO:0005634">
    <property type="term" value="C:nucleus"/>
    <property type="evidence" value="ECO:0007669"/>
    <property type="project" value="TreeGrafter"/>
</dbReference>
<dbReference type="GO" id="GO:0019903">
    <property type="term" value="F:protein phosphatase binding"/>
    <property type="evidence" value="ECO:0007669"/>
    <property type="project" value="InterPro"/>
</dbReference>
<dbReference type="GO" id="GO:0019888">
    <property type="term" value="F:protein phosphatase regulator activity"/>
    <property type="evidence" value="ECO:0007669"/>
    <property type="project" value="TreeGrafter"/>
</dbReference>
<dbReference type="InterPro" id="IPR007587">
    <property type="entry name" value="SAPS"/>
</dbReference>
<dbReference type="PANTHER" id="PTHR12634:SF8">
    <property type="entry name" value="FIERY MOUNTAIN, ISOFORM D"/>
    <property type="match status" value="1"/>
</dbReference>
<dbReference type="PANTHER" id="PTHR12634">
    <property type="entry name" value="SIT4 YEAST -ASSOCIATING PROTEIN-RELATED"/>
    <property type="match status" value="1"/>
</dbReference>
<dbReference type="Pfam" id="PF04499">
    <property type="entry name" value="SAPS"/>
    <property type="match status" value="1"/>
</dbReference>
<feature type="chain" id="PRO_0000393320" description="SIT4-associating protein SAP190">
    <location>
        <begin position="1"/>
        <end position="1033"/>
    </location>
</feature>
<feature type="region of interest" description="Disordered" evidence="3">
    <location>
        <begin position="32"/>
        <end position="82"/>
    </location>
</feature>
<feature type="region of interest" description="Disordered" evidence="3">
    <location>
        <begin position="147"/>
        <end position="213"/>
    </location>
</feature>
<feature type="region of interest" description="Disordered" evidence="3">
    <location>
        <begin position="768"/>
        <end position="813"/>
    </location>
</feature>
<feature type="region of interest" description="Disordered" evidence="3">
    <location>
        <begin position="828"/>
        <end position="1033"/>
    </location>
</feature>
<feature type="compositionally biased region" description="Basic and acidic residues" evidence="3">
    <location>
        <begin position="158"/>
        <end position="170"/>
    </location>
</feature>
<feature type="compositionally biased region" description="Acidic residues" evidence="3">
    <location>
        <begin position="171"/>
        <end position="182"/>
    </location>
</feature>
<feature type="compositionally biased region" description="Basic and acidic residues" evidence="3">
    <location>
        <begin position="183"/>
        <end position="195"/>
    </location>
</feature>
<feature type="compositionally biased region" description="Acidic residues" evidence="3">
    <location>
        <begin position="784"/>
        <end position="793"/>
    </location>
</feature>
<feature type="compositionally biased region" description="Acidic residues" evidence="3">
    <location>
        <begin position="828"/>
        <end position="838"/>
    </location>
</feature>
<feature type="compositionally biased region" description="Basic and acidic residues" evidence="3">
    <location>
        <begin position="858"/>
        <end position="879"/>
    </location>
</feature>
<feature type="compositionally biased region" description="Polar residues" evidence="3">
    <location>
        <begin position="909"/>
        <end position="924"/>
    </location>
</feature>
<feature type="compositionally biased region" description="Acidic residues" evidence="3">
    <location>
        <begin position="932"/>
        <end position="944"/>
    </location>
</feature>
<feature type="compositionally biased region" description="Acidic residues" evidence="3">
    <location>
        <begin position="1000"/>
        <end position="1018"/>
    </location>
</feature>
<feature type="modified residue" description="Phosphoserine" evidence="2">
    <location>
        <position position="774"/>
    </location>
</feature>
<feature type="modified residue" description="Phosphoserine" evidence="2">
    <location>
        <position position="857"/>
    </location>
</feature>
<feature type="modified residue" description="Phosphoserine" evidence="2">
    <location>
        <position position="862"/>
    </location>
</feature>
<feature type="modified residue" description="Phosphoserine" evidence="2">
    <location>
        <position position="892"/>
    </location>
</feature>
<feature type="modified residue" description="Phosphothreonine" evidence="2">
    <location>
        <position position="990"/>
    </location>
</feature>
<feature type="modified residue" description="Phosphoserine" evidence="2">
    <location>
        <position position="991"/>
    </location>
</feature>
<evidence type="ECO:0000250" key="1"/>
<evidence type="ECO:0000250" key="2">
    <source>
        <dbReference type="UniProtKB" id="P36123"/>
    </source>
</evidence>
<evidence type="ECO:0000256" key="3">
    <source>
        <dbReference type="SAM" id="MobiDB-lite"/>
    </source>
</evidence>
<evidence type="ECO:0000305" key="4"/>
<organism>
    <name type="scientific">Saccharomyces cerevisiae (strain Lalvin EC1118 / Prise de mousse)</name>
    <name type="common">Baker's yeast</name>
    <dbReference type="NCBI Taxonomy" id="643680"/>
    <lineage>
        <taxon>Eukaryota</taxon>
        <taxon>Fungi</taxon>
        <taxon>Dikarya</taxon>
        <taxon>Ascomycota</taxon>
        <taxon>Saccharomycotina</taxon>
        <taxon>Saccharomycetes</taxon>
        <taxon>Saccharomycetales</taxon>
        <taxon>Saccharomycetaceae</taxon>
        <taxon>Saccharomyces</taxon>
    </lineage>
</organism>
<comment type="function">
    <text evidence="1">Positive regulator of protein phosphatase SIT4. Involved in the general amino acid control (GAAC) response regulated by TOR. Involved in the dephosphorylation of the elongator complex subunit IKI3 (By similarity).</text>
</comment>
<comment type="subunit">
    <text evidence="1">Associates with the SIT4 protein phosphatase catalytic subunit in a cell-cycle-dependent manner.</text>
</comment>
<comment type="subcellular location">
    <subcellularLocation>
        <location evidence="4">Cytoplasm</location>
    </subcellularLocation>
</comment>
<comment type="PTM">
    <text evidence="1">Hyperphosphorylated in the absence of SIT4.</text>
</comment>
<comment type="similarity">
    <text evidence="4">Belongs to the SAPS family.</text>
</comment>
<sequence length="1033" mass="117120">MSGSFWKFGQDYSIESPVSKILNSAFIKINKDQDDDVPTGTCEENIADDEDNSSHDYAASEDNVVNENEEKEEENTLPTTESEYENYRPNLDVLDDLLDDDELYTELMCSNFKLLIFLKYPEVLSKLIEYVTNEKILDEETDSAKKPEIIEGVNDHPILIERDRKDKKEDAEEGGDSEETTNDSDHDSGDERSVDSEETSITLPPESEEQVETRRARIAAEILSADVWPISAAIMQNKDLLGRLWSILDHPAPLPIPASTYFMKINERLLDMDITGMLEFILSRDSLVARFLTHVDNPSLMDFLLKVISTDKPDSPTGVIKILKSQELIPKLLDHLNPEYGISTQSAAGDFIKAFVTLSTNSSNELASGIGPNELTRQLVSEEMIEKLIKIMLKGGTSLSNGVGIIIELIRKNNSDYDFIQLVYTTLESHPPTDRDPIHLIHLVKLFAKHMPDFADMLDKTKLPLMEMPFGNIEPLGFERFKICELIAELLHCSNMTLLNEPNGEMIAQERDIERAKELETSTEKENITAIVDNKSSYYDKDCVEKDITENLGALQINNQGSEEDELNDTGVSSVKLDVKSDAKVVEGLENDASGVELYDETLSDTESVRECLREKPLVGDRLKIALEDTKILISILDMFTEFPWNNFLHNVIFDIAQQIFNGPLKTGYNRFLLKDYLVDAYLTKKIVDADKACQDYEKKTGLRHGYMGHLTLVAEEISKFKEYIDEMKLTFCNTAVSDRFEEPFWKEYSETILADTREKYNTVLGDFGNDQESDDDVIRNSDSEDIIGDTEGNENYGNGENDELLSNGHDSGNMDLYYNFNNNENEENEEDYAEYSDVDNKNYYNNVETNDDDYDSDDGKSKSAESEFTDKISEHRDGNSLYNEDNDENGSDKWTSGTSLFPPDHFPSRSQPSDPKLQDQNIFHHQFDFEGVGDDDDYMDPNDDGQSYARPGNPLYTTPKTPPRPKTILFNSLSALDNNGEDEEVALGTSVDDRMDNEISSDEEDSEDEDEENDMGNEEGYSLYRSRSKEAF</sequence>
<gene>
    <name type="primary">SAP190</name>
    <name type="ORF">EC1118_1K5_2872g</name>
</gene>
<keyword id="KW-0131">Cell cycle</keyword>
<keyword id="KW-0963">Cytoplasm</keyword>
<keyword id="KW-0597">Phosphoprotein</keyword>
<accession>C8ZCJ2</accession>
<reference key="1">
    <citation type="journal article" date="2009" name="Proc. Natl. Acad. Sci. U.S.A.">
        <title>Eukaryote-to-eukaryote gene transfer events revealed by the genome sequence of the wine yeast Saccharomyces cerevisiae EC1118.</title>
        <authorList>
            <person name="Novo M."/>
            <person name="Bigey F."/>
            <person name="Beyne E."/>
            <person name="Galeote V."/>
            <person name="Gavory F."/>
            <person name="Mallet S."/>
            <person name="Cambon B."/>
            <person name="Legras J.-L."/>
            <person name="Wincker P."/>
            <person name="Casaregola S."/>
            <person name="Dequin S."/>
        </authorList>
    </citation>
    <scope>NUCLEOTIDE SEQUENCE [LARGE SCALE GENOMIC DNA]</scope>
    <source>
        <strain>Lalvin EC1118 / Prise de mousse</strain>
    </source>
</reference>
<name>SA190_YEAS8</name>
<proteinExistence type="inferred from homology"/>